<reference key="1">
    <citation type="journal article" date="1996" name="DNA Res.">
        <title>A 460-kb DNA sequence of the Escherichia coli K-12 genome corresponding to the 40.1-50.0 min region on the linkage map.</title>
        <authorList>
            <person name="Itoh T."/>
            <person name="Aiba H."/>
            <person name="Baba T."/>
            <person name="Fujita K."/>
            <person name="Hayashi K."/>
            <person name="Inada T."/>
            <person name="Isono K."/>
            <person name="Kasai H."/>
            <person name="Kimura S."/>
            <person name="Kitakawa M."/>
            <person name="Kitagawa M."/>
            <person name="Makino K."/>
            <person name="Miki T."/>
            <person name="Mizobuchi K."/>
            <person name="Mori H."/>
            <person name="Mori T."/>
            <person name="Motomura K."/>
            <person name="Nakade S."/>
            <person name="Nakamura Y."/>
            <person name="Nashimoto H."/>
            <person name="Nishio Y."/>
            <person name="Oshima T."/>
            <person name="Saito N."/>
            <person name="Sampei G."/>
            <person name="Seki Y."/>
            <person name="Sivasundaram S."/>
            <person name="Tagami H."/>
            <person name="Takeda J."/>
            <person name="Takemoto K."/>
            <person name="Wada C."/>
            <person name="Yamamoto Y."/>
            <person name="Horiuchi T."/>
        </authorList>
    </citation>
    <scope>NUCLEOTIDE SEQUENCE [LARGE SCALE GENOMIC DNA]</scope>
    <source>
        <strain>K12 / W3110 / ATCC 27325 / DSM 5911</strain>
    </source>
</reference>
<reference key="2">
    <citation type="journal article" date="1997" name="Science">
        <title>The complete genome sequence of Escherichia coli K-12.</title>
        <authorList>
            <person name="Blattner F.R."/>
            <person name="Plunkett G. III"/>
            <person name="Bloch C.A."/>
            <person name="Perna N.T."/>
            <person name="Burland V."/>
            <person name="Riley M."/>
            <person name="Collado-Vides J."/>
            <person name="Glasner J.D."/>
            <person name="Rode C.K."/>
            <person name="Mayhew G.F."/>
            <person name="Gregor J."/>
            <person name="Davis N.W."/>
            <person name="Kirkpatrick H.A."/>
            <person name="Goeden M.A."/>
            <person name="Rose D.J."/>
            <person name="Mau B."/>
            <person name="Shao Y."/>
        </authorList>
    </citation>
    <scope>NUCLEOTIDE SEQUENCE [LARGE SCALE GENOMIC DNA]</scope>
    <source>
        <strain>K12 / MG1655 / ATCC 47076</strain>
    </source>
</reference>
<reference key="3">
    <citation type="journal article" date="2006" name="Mol. Syst. Biol.">
        <title>Highly accurate genome sequences of Escherichia coli K-12 strains MG1655 and W3110.</title>
        <authorList>
            <person name="Hayashi K."/>
            <person name="Morooka N."/>
            <person name="Yamamoto Y."/>
            <person name="Fujita K."/>
            <person name="Isono K."/>
            <person name="Choi S."/>
            <person name="Ohtsubo E."/>
            <person name="Baba T."/>
            <person name="Wanner B.L."/>
            <person name="Mori H."/>
            <person name="Horiuchi T."/>
        </authorList>
    </citation>
    <scope>NUCLEOTIDE SEQUENCE [LARGE SCALE GENOMIC DNA]</scope>
    <source>
        <strain>K12 / W3110 / ATCC 27325 / DSM 5911</strain>
    </source>
</reference>
<reference key="4">
    <citation type="submission" date="1993-10" db="EMBL/GenBank/DDBJ databases">
        <title>Automated multiplex sequencing of the E.coli genome.</title>
        <authorList>
            <person name="Richterich P."/>
            <person name="Lakey N."/>
            <person name="Gryan G."/>
            <person name="Jaehn L."/>
            <person name="Mintz L."/>
            <person name="Robison K."/>
            <person name="Church G.M."/>
        </authorList>
    </citation>
    <scope>NUCLEOTIDE SEQUENCE [LARGE SCALE GENOMIC DNA] OF 1-149</scope>
    <source>
        <strain>K12 / BHB2600</strain>
    </source>
</reference>
<reference key="5">
    <citation type="journal article" date="2005" name="Science">
        <title>Global topology analysis of the Escherichia coli inner membrane proteome.</title>
        <authorList>
            <person name="Daley D.O."/>
            <person name="Rapp M."/>
            <person name="Granseth E."/>
            <person name="Melen K."/>
            <person name="Drew D."/>
            <person name="von Heijne G."/>
        </authorList>
    </citation>
    <scope>TOPOLOGY [LARGE SCALE ANALYSIS]</scope>
    <source>
        <strain>K12 / MG1655 / ATCC 47076</strain>
    </source>
</reference>
<keyword id="KW-0997">Cell inner membrane</keyword>
<keyword id="KW-1003">Cell membrane</keyword>
<keyword id="KW-0472">Membrane</keyword>
<keyword id="KW-1185">Reference proteome</keyword>
<keyword id="KW-0812">Transmembrane</keyword>
<keyword id="KW-1133">Transmembrane helix</keyword>
<feature type="chain" id="PRO_0000169106" description="Inner membrane protein YeeA">
    <location>
        <begin position="1"/>
        <end position="352"/>
    </location>
</feature>
<feature type="topological domain" description="Cytoplasmic" evidence="1">
    <location>
        <begin position="1"/>
        <end position="25"/>
    </location>
</feature>
<feature type="transmembrane region" description="Helical" evidence="1">
    <location>
        <begin position="26"/>
        <end position="46"/>
    </location>
</feature>
<feature type="transmembrane region" description="Helical" evidence="1">
    <location>
        <begin position="47"/>
        <end position="67"/>
    </location>
</feature>
<feature type="topological domain" description="Cytoplasmic" evidence="1">
    <location>
        <position position="68"/>
    </location>
</feature>
<feature type="transmembrane region" description="Helical" evidence="1">
    <location>
        <begin position="69"/>
        <end position="89"/>
    </location>
</feature>
<feature type="topological domain" description="Periplasmic" evidence="1">
    <location>
        <position position="90"/>
    </location>
</feature>
<feature type="transmembrane region" description="Helical" evidence="1">
    <location>
        <begin position="91"/>
        <end position="111"/>
    </location>
</feature>
<feature type="topological domain" description="Cytoplasmic" evidence="1">
    <location>
        <begin position="112"/>
        <end position="117"/>
    </location>
</feature>
<feature type="transmembrane region" description="Helical" evidence="1">
    <location>
        <begin position="118"/>
        <end position="138"/>
    </location>
</feature>
<feature type="topological domain" description="Periplasmic" evidence="1">
    <location>
        <begin position="139"/>
        <end position="147"/>
    </location>
</feature>
<feature type="transmembrane region" description="Helical" evidence="1">
    <location>
        <begin position="148"/>
        <end position="168"/>
    </location>
</feature>
<feature type="topological domain" description="Cytoplasmic" evidence="1">
    <location>
        <begin position="169"/>
        <end position="352"/>
    </location>
</feature>
<accession>P33011</accession>
<accession>P76368</accession>
<evidence type="ECO:0000255" key="1"/>
<sequence>MRADKSLSPFEIRVYRHYRIVHGTRVALAFLLTFLIIRLFTIPESTWPLVTMVVIMGPISFWGNVVPRAFERIGGTVLGSILGLIALQLELISLPLMLVWCAAAMFLCGWLALGKKPYQGLLIGVTLAIVVGSPTGEIDTALWRSGDVILGSLLAMLFTGIWPQRAFIHWRIQLAKSLTEYNRVYQSAFSPNLLERPRLESHLQKLLTDAVKMRGLIAPASKETRIPKSIYEGIQTINRNLVCMLELQINAYWATRPSHFVLLNAQKLRDTQHMMQQILLSLVHALYEGNPQPVFANTEKLNDAVEELRQLLNNHHDLKVVETPIYGYVWLNMETAHQLELLSNLICRALRK</sequence>
<protein>
    <recommendedName>
        <fullName>Inner membrane protein YeeA</fullName>
    </recommendedName>
</protein>
<gene>
    <name type="primary">yeeA</name>
    <name type="ordered locus">b2008</name>
    <name type="ordered locus">JW1990</name>
</gene>
<organism>
    <name type="scientific">Escherichia coli (strain K12)</name>
    <dbReference type="NCBI Taxonomy" id="83333"/>
    <lineage>
        <taxon>Bacteria</taxon>
        <taxon>Pseudomonadati</taxon>
        <taxon>Pseudomonadota</taxon>
        <taxon>Gammaproteobacteria</taxon>
        <taxon>Enterobacterales</taxon>
        <taxon>Enterobacteriaceae</taxon>
        <taxon>Escherichia</taxon>
    </lineage>
</organism>
<name>YEEA_ECOLI</name>
<proteinExistence type="evidence at protein level"/>
<comment type="subcellular location">
    <subcellularLocation>
        <location>Cell inner membrane</location>
        <topology>Multi-pass membrane protein</topology>
    </subcellularLocation>
</comment>
<dbReference type="EMBL" id="U00096">
    <property type="protein sequence ID" value="AAC75069.1"/>
    <property type="molecule type" value="Genomic_DNA"/>
</dbReference>
<dbReference type="EMBL" id="AP009048">
    <property type="protein sequence ID" value="BAA15829.1"/>
    <property type="molecule type" value="Genomic_DNA"/>
</dbReference>
<dbReference type="EMBL" id="U00009">
    <property type="protein sequence ID" value="AAA16414.1"/>
    <property type="molecule type" value="Genomic_DNA"/>
</dbReference>
<dbReference type="PIR" id="G64965">
    <property type="entry name" value="G64965"/>
</dbReference>
<dbReference type="RefSeq" id="NP_416512.1">
    <property type="nucleotide sequence ID" value="NC_000913.3"/>
</dbReference>
<dbReference type="RefSeq" id="WP_001200891.1">
    <property type="nucleotide sequence ID" value="NZ_SSTT01000011.1"/>
</dbReference>
<dbReference type="SMR" id="P33011"/>
<dbReference type="BioGRID" id="4261061">
    <property type="interactions" value="23"/>
</dbReference>
<dbReference type="FunCoup" id="P33011">
    <property type="interactions" value="32"/>
</dbReference>
<dbReference type="STRING" id="511145.b2008"/>
<dbReference type="TCDB" id="2.A.85.7.1">
    <property type="family name" value="the aromatic acid exporter (arae) family"/>
</dbReference>
<dbReference type="jPOST" id="P33011"/>
<dbReference type="PaxDb" id="511145-b2008"/>
<dbReference type="EnsemblBacteria" id="AAC75069">
    <property type="protein sequence ID" value="AAC75069"/>
    <property type="gene ID" value="b2008"/>
</dbReference>
<dbReference type="GeneID" id="946545"/>
<dbReference type="KEGG" id="ecj:JW1990"/>
<dbReference type="KEGG" id="eco:b2008"/>
<dbReference type="KEGG" id="ecoc:C3026_11330"/>
<dbReference type="PATRIC" id="fig|1411691.4.peg.244"/>
<dbReference type="EchoBASE" id="EB1837"/>
<dbReference type="eggNOG" id="COG1289">
    <property type="taxonomic scope" value="Bacteria"/>
</dbReference>
<dbReference type="HOGENOM" id="CLU_064722_0_0_6"/>
<dbReference type="InParanoid" id="P33011"/>
<dbReference type="OMA" id="PHGEWAS"/>
<dbReference type="OrthoDB" id="977186at2"/>
<dbReference type="PhylomeDB" id="P33011"/>
<dbReference type="BioCyc" id="EcoCyc:EG11891-MONOMER"/>
<dbReference type="PRO" id="PR:P33011"/>
<dbReference type="Proteomes" id="UP000000625">
    <property type="component" value="Chromosome"/>
</dbReference>
<dbReference type="GO" id="GO:0005886">
    <property type="term" value="C:plasma membrane"/>
    <property type="evidence" value="ECO:0000314"/>
    <property type="project" value="EcoCyc"/>
</dbReference>
<dbReference type="GO" id="GO:0022857">
    <property type="term" value="F:transmembrane transporter activity"/>
    <property type="evidence" value="ECO:0007669"/>
    <property type="project" value="InterPro"/>
</dbReference>
<dbReference type="InterPro" id="IPR006726">
    <property type="entry name" value="PHBA_efflux_AaeB/fusaric-R"/>
</dbReference>
<dbReference type="PANTHER" id="PTHR30509:SF42">
    <property type="entry name" value="INNER MEMBRANE PROTEIN YEEA"/>
    <property type="match status" value="1"/>
</dbReference>
<dbReference type="PANTHER" id="PTHR30509">
    <property type="entry name" value="P-HYDROXYBENZOIC ACID EFFLUX PUMP SUBUNIT-RELATED"/>
    <property type="match status" value="1"/>
</dbReference>
<dbReference type="Pfam" id="PF04632">
    <property type="entry name" value="FUSC"/>
    <property type="match status" value="1"/>
</dbReference>